<name>NAC54_ARATH</name>
<gene>
    <name type="primary">NAC054</name>
    <name type="synonym">CUC1</name>
    <name type="synonym">NAC1</name>
    <name type="ordered locus">At3g15170</name>
    <name type="ORF">F4B12.8</name>
</gene>
<sequence>MDVDVFNGWGRPRFEDESLMPPGFRFHPTDEELITYYLLKKVLDSNFSCAAISQVDLNKSEPWELPEKAKMGEKEWYFFTLRDRKYPTGLRTNRATEAGYWKATGKDREIKSSKTKSLLGMKKTLVFYKGRAPKGEKSCWVMHEYRLDGKFSYHYISSSAKDEWVLCKVCLKSGVVSRETNLISSSSSSAVTGEFSSAGSAIAPIINTFATEHVSCFSNNSAAHTDASFHTFLPAPPPSLPPRQPRHVGDGVAFGQFLDLGSSGQIDFDAAAAAFFPNLPSLPPTVLPPPPSFAMYGGGSPAVSVWPFTL</sequence>
<protein>
    <recommendedName>
        <fullName>Protein CUP-SHAPED COTYLEDON 1</fullName>
    </recommendedName>
    <alternativeName>
        <fullName>NAC domain-containing protein 1</fullName>
    </alternativeName>
    <alternativeName>
        <fullName>NAC domain-containing protein 54</fullName>
        <shortName>ANAC054</shortName>
    </alternativeName>
    <alternativeName>
        <fullName>NAC domain-containing protein CUC1</fullName>
    </alternativeName>
</protein>
<comment type="function">
    <text evidence="2 3 4 5 6 7 8 9 10 11 12 13 14 17 18 19">Transcription activator of STM and KNAT6. Involved in molecular mechanisms regulating shoot apical meristem (SAM) formation during embryogenesis and organ separation. Required for the fusion of septa of gynoecia along the length of the ovaries. Activates the shoot formation in callus in a STM-dependent manner. Seems to act as an inhibitor of cell division.</text>
</comment>
<comment type="subcellular location">
    <subcellularLocation>
        <location evidence="1 12">Nucleus</location>
    </subcellularLocation>
</comment>
<comment type="tissue specificity">
    <text evidence="4">Expressed in inflorescence stems, rosette leaves, aerial parts of seedlings, flowers, floral buds and roots.</text>
</comment>
<comment type="developmental stage">
    <text evidence="4 6">First observed in young embryonic SAM. Later confined to the boundaries between cotyledon primordia and the SAM. In mature embryos, localized around first leaves primordia. Only weakly present in vegetative SAM. In inflorescence, observed at the boundaries between floral organ primordia. In callus, expressed during transition to shoot development, with a progressive restriction to specific areas corresponding to future shoot apex.</text>
</comment>
<comment type="induction">
    <text evidence="10 11 13 15 16 18">By BRM, at the chromatin level, and conferring a very specific spatial expression pattern. Directly induced by ESR2 in response to cytokinins. Precise spatial regulation by post-transcriptional repression directed by the microRNA miR164.</text>
</comment>
<comment type="domain">
    <text evidence="12">The NAC domain includes a DNA-binding domain and a dimerization domain, and confers the specificity of the transactivated target genes.</text>
</comment>
<comment type="miscellaneous">
    <text>Overexpressing transgenic plants exhibit adventitious shoot apical meristems.</text>
</comment>
<comment type="sequence caution" evidence="20">
    <conflict type="erroneous gene model prediction">
        <sequence resource="EMBL-CDS" id="BAB02571"/>
    </conflict>
</comment>
<reference key="1">
    <citation type="journal article" date="2001" name="Development">
        <title>The CUP-SHAPED COTYLEDON1 gene of Arabidopsis regulates shoot apical meristem formation.</title>
        <authorList>
            <person name="Takada S."/>
            <person name="Hibara K."/>
            <person name="Ishida T."/>
            <person name="Tasaka M."/>
        </authorList>
    </citation>
    <scope>NUCLEOTIDE SEQUENCE [MRNA]</scope>
    <scope>FUNCTION</scope>
    <scope>MUTAGENESIS OF LEU-65; LYS-123 AND 306-TRP--LEU-310</scope>
    <scope>DEVELOPMENTAL STAGE</scope>
    <scope>TISSUE SPECIFICITY</scope>
    <source>
        <strain>cv. Columbia</strain>
    </source>
</reference>
<reference key="2">
    <citation type="journal article" date="2000" name="DNA Res.">
        <title>Structural analysis of Arabidopsis thaliana chromosome 3. II. Sequence features of the 4,251,695 bp regions covered by 90 P1, TAC and BAC clones.</title>
        <authorList>
            <person name="Kaneko T."/>
            <person name="Katoh T."/>
            <person name="Sato S."/>
            <person name="Nakamura Y."/>
            <person name="Asamizu E."/>
            <person name="Tabata S."/>
        </authorList>
    </citation>
    <scope>NUCLEOTIDE SEQUENCE [LARGE SCALE GENOMIC DNA]</scope>
    <source>
        <strain>cv. Columbia</strain>
    </source>
</reference>
<reference key="3">
    <citation type="journal article" date="2017" name="Plant J.">
        <title>Araport11: a complete reannotation of the Arabidopsis thaliana reference genome.</title>
        <authorList>
            <person name="Cheng C.Y."/>
            <person name="Krishnakumar V."/>
            <person name="Chan A.P."/>
            <person name="Thibaud-Nissen F."/>
            <person name="Schobel S."/>
            <person name="Town C.D."/>
        </authorList>
    </citation>
    <scope>GENOME REANNOTATION</scope>
    <source>
        <strain>cv. Columbia</strain>
    </source>
</reference>
<reference key="4">
    <citation type="submission" date="2006-07" db="EMBL/GenBank/DDBJ databases">
        <title>Arabidopsis ORF clones.</title>
        <authorList>
            <person name="Quinitio C."/>
            <person name="Chen H."/>
            <person name="Kim C.J."/>
            <person name="Shinn P."/>
            <person name="Ecker J.R."/>
        </authorList>
    </citation>
    <scope>NUCLEOTIDE SEQUENCE [LARGE SCALE MRNA]</scope>
    <source>
        <strain>cv. Columbia</strain>
    </source>
</reference>
<reference key="5">
    <citation type="journal article" date="1997" name="Plant Cell">
        <title>Genes involved in organ separation in Arabidopsis: an analysis of the cup-shaped cotyledon mutant.</title>
        <authorList>
            <person name="Aida M."/>
            <person name="Ishida T."/>
            <person name="Fukaki H."/>
            <person name="Fujisawa H."/>
            <person name="Tasaka M."/>
        </authorList>
    </citation>
    <scope>FUNCTION</scope>
</reference>
<reference key="6">
    <citation type="journal article" date="1999" name="Development">
        <title>Shoot apical meristem and cotyledon formation during Arabidopsis embryogenesis: interaction among the CUP-SHAPED COTYLEDON and SHOOT MERISTEMLESS genes.</title>
        <authorList>
            <person name="Aida M."/>
            <person name="Ishida T."/>
            <person name="Tasaka M."/>
        </authorList>
    </citation>
    <scope>FUNCTION</scope>
</reference>
<reference key="7">
    <citation type="journal article" date="2000" name="Plant Cell Physiol.">
        <title>Involvement of CUP-SHAPED COTYLEDON genes in gynoecium and ovule development in Arabidopsis thaliana.</title>
        <authorList>
            <person name="Ishida T."/>
            <person name="Aida M."/>
            <person name="Takada S."/>
            <person name="Tasaka M."/>
        </authorList>
    </citation>
    <scope>FUNCTION</scope>
</reference>
<reference key="8">
    <citation type="journal article" date="2002" name="Development">
        <title>Roles of PIN-FORMED1 and MONOPTEROS in pattern formation of the apical region of the Arabidopsis embryo.</title>
        <authorList>
            <person name="Aida M."/>
            <person name="Vernoux T."/>
            <person name="Furutani M."/>
            <person name="Traas J."/>
            <person name="Tasaka M."/>
        </authorList>
    </citation>
    <scope>FUNCTION</scope>
</reference>
<reference key="9">
    <citation type="journal article" date="2002" name="Plant J.">
        <title>Developmental events and shoot apical meristem gene expression patterns during shoot development in Arabidopsis thaliana.</title>
        <authorList>
            <person name="Cary A.J."/>
            <person name="Che P."/>
            <person name="Howell S.H."/>
        </authorList>
    </citation>
    <scope>FUNCTION</scope>
    <scope>DEVELOPMENTAL STAGE</scope>
</reference>
<reference key="10">
    <citation type="journal article" date="2003" name="DNA Res.">
        <title>Comprehensive analysis of NAC family genes in Oryza sativa and Arabidopsis thaliana.</title>
        <authorList>
            <person name="Ooka H."/>
            <person name="Satoh K."/>
            <person name="Doi K."/>
            <person name="Nagata T."/>
            <person name="Otomo Y."/>
            <person name="Murakami K."/>
            <person name="Matsubara K."/>
            <person name="Osato N."/>
            <person name="Kawai J."/>
            <person name="Carninci P."/>
            <person name="Hayashizaki Y."/>
            <person name="Suzuki K."/>
            <person name="Kojima K."/>
            <person name="Takahara Y."/>
            <person name="Yamamoto K."/>
            <person name="Kikuchi S."/>
        </authorList>
    </citation>
    <scope>GENE FAMILY</scope>
    <scope>NOMENCLATURE</scope>
</reference>
<reference key="11">
    <citation type="journal article" date="2003" name="Plant Cell Physiol.">
        <title>The CUP-SHAPED COTYLEDON genes promote adventitious shoot formation on calli.</title>
        <authorList>
            <person name="Daimon Y."/>
            <person name="Takabe K."/>
            <person name="Tasaka M."/>
        </authorList>
    </citation>
    <scope>FUNCTION</scope>
</reference>
<reference key="12">
    <citation type="journal article" date="2003" name="Plant J.">
        <title>Dominant repression of target genes by chimeric repressors that include the EAR motif, a repression domain, in Arabidopsis.</title>
        <authorList>
            <person name="Hiratsu K."/>
            <person name="Matsui K."/>
            <person name="Koyama T."/>
            <person name="Ohme-Takagi M."/>
        </authorList>
    </citation>
    <scope>FUNCTION</scope>
</reference>
<reference key="13">
    <citation type="journal article" date="2003" name="Plant J.">
        <title>CUC1 gene activates the expression of SAM-related genes to induce adventitious shoot formation.</title>
        <authorList>
            <person name="Hibara K."/>
            <person name="Takada S."/>
            <person name="Tasaka M."/>
        </authorList>
    </citation>
    <scope>FUNCTION</scope>
</reference>
<reference key="14">
    <citation type="journal article" date="2004" name="Curr. Biol.">
        <title>MicroRNA regulation of NAC-domain targets is required for proper formation and separation of adjacent embryonic, vegetative, and floral organs.</title>
        <authorList>
            <person name="Mallory A.C."/>
            <person name="Dugas D.V."/>
            <person name="Bartel D.P."/>
            <person name="Bartel B."/>
        </authorList>
    </citation>
    <scope>FUNCTION</scope>
    <scope>INDUCTION BY MIR164</scope>
</reference>
<reference key="15">
    <citation type="journal article" date="2004" name="Development">
        <title>MicroRNA regulation of the CUC genes is required for boundary size control in Arabidopsis meristems.</title>
        <authorList>
            <person name="Laufs P."/>
            <person name="Peaucelle A."/>
            <person name="Morin H."/>
            <person name="Traas J."/>
        </authorList>
    </citation>
    <scope>FUNCTION</scope>
    <scope>INDUCTION BY MIR164</scope>
</reference>
<reference key="16">
    <citation type="journal article" date="2004" name="Plant J.">
        <title>The NAC domain mediates functional specificity of CUP-SHAPED COTYLEDON proteins.</title>
        <authorList>
            <person name="Taoka K."/>
            <person name="Yanagimoto Y."/>
            <person name="Daimon Y."/>
            <person name="Hibara K."/>
            <person name="Aida M."/>
            <person name="Tasaka M."/>
        </authorList>
    </citation>
    <scope>FUNCTION</scope>
    <scope>MUTAGENESIS OF TRP-306 AND PHE-308</scope>
    <scope>DOMAIN</scope>
    <scope>TRANSACTIVATING REGION</scope>
    <scope>SUBCELLULAR LOCATION</scope>
</reference>
<reference key="17">
    <citation type="journal article" date="2005" name="Curr. Biol.">
        <title>The early extra petals1 mutant uncovers a role for microRNA miR164c in regulating petal number in Arabidopsis.</title>
        <authorList>
            <person name="Baker C.C."/>
            <person name="Sieber P."/>
            <person name="Wellmer F."/>
            <person name="Meyerowitz E.M."/>
        </authorList>
    </citation>
    <scope>FUNCTION</scope>
    <scope>INDUCTION BY MIR164</scope>
</reference>
<reference key="18">
    <citation type="journal article" date="2006" name="Development">
        <title>A role for chromatin remodeling in regulation of CUC gene expression in the Arabidopsis cotyledon boundary.</title>
        <authorList>
            <person name="Kwon C.S."/>
            <person name="Hibara K."/>
            <person name="Pfluger J."/>
            <person name="Bezhani S."/>
            <person name="Metha H."/>
            <person name="Aida M."/>
            <person name="Tasaka M."/>
            <person name="Wagner D."/>
        </authorList>
    </citation>
    <scope>INDUCTION BY BRM</scope>
</reference>
<reference key="19">
    <citation type="journal article" date="2006" name="Plant Cell Physiol.">
        <title>The ENHANCER OF SHOOT REGENERATION 2 gene in Arabidopsis regulates CUP-SHAPED COTYLEDON 1 at the transcriptional level and controls cotyledon development.</title>
        <authorList>
            <person name="Ikeda Y."/>
            <person name="Banno H."/>
            <person name="Niu Q.-W."/>
            <person name="Howell S.H."/>
            <person name="Chua N.-H."/>
        </authorList>
    </citation>
    <scope>INDUCTION BY ESR2</scope>
</reference>
<reference key="20">
    <citation type="journal article" date="2006" name="Plant Cell">
        <title>KNAT6: an Arabidopsis homeobox gene involved in meristem activity and organ separation.</title>
        <authorList>
            <person name="Belles-Boix E."/>
            <person name="Hamant O."/>
            <person name="Witiak S.M."/>
            <person name="Morin H."/>
            <person name="Traas J."/>
            <person name="Pautot V."/>
        </authorList>
    </citation>
    <scope>FUNCTION</scope>
</reference>
<reference key="21">
    <citation type="journal article" date="2006" name="Plant Cell">
        <title>Arabidopsis CUP-SHAPED COTYLEDON3 regulates postembryonic shoot meristem and organ boundary formation.</title>
        <authorList>
            <person name="Hibara K."/>
            <person name="Karim M.R."/>
            <person name="Takada S."/>
            <person name="Taoka K."/>
            <person name="Furutani M."/>
            <person name="Aida M."/>
            <person name="Tasaka M."/>
        </authorList>
    </citation>
    <scope>FUNCTION</scope>
    <scope>MUTAGENESIS OF GLY-23; LEU-38; GLU-75; ARG-84; GLY-99 AND PRO-307</scope>
</reference>
<reference key="22">
    <citation type="journal article" date="2007" name="Development">
        <title>Redundancy and specialization among plant microRNAs: role of the MIR164 family in developmental robustness.</title>
        <authorList>
            <person name="Sieber P."/>
            <person name="Wellmer F."/>
            <person name="Gheyselinck J."/>
            <person name="Riechmann J.L."/>
            <person name="Meyerowitz E.M."/>
        </authorList>
    </citation>
    <scope>FUNCTION</scope>
    <scope>INDUCTION BY MIR164</scope>
</reference>
<dbReference type="EMBL" id="BT026080">
    <property type="protein sequence ID" value="ABG48436.1"/>
    <property type="molecule type" value="mRNA"/>
</dbReference>
<dbReference type="EMBL" id="AP001299">
    <property type="protein sequence ID" value="BAB02571.1"/>
    <property type="status" value="ALT_SEQ"/>
    <property type="molecule type" value="Genomic_DNA"/>
</dbReference>
<dbReference type="EMBL" id="CP002686">
    <property type="protein sequence ID" value="AEE75627.1"/>
    <property type="molecule type" value="Genomic_DNA"/>
</dbReference>
<dbReference type="EMBL" id="AB049069">
    <property type="protein sequence ID" value="BAB20598.1"/>
    <property type="molecule type" value="mRNA"/>
</dbReference>
<dbReference type="RefSeq" id="NP_188135.1">
    <property type="nucleotide sequence ID" value="NM_112380.3"/>
</dbReference>
<dbReference type="SMR" id="Q9FRV4"/>
<dbReference type="BioGRID" id="6082">
    <property type="interactions" value="3"/>
</dbReference>
<dbReference type="IntAct" id="Q9FRV4">
    <property type="interactions" value="11"/>
</dbReference>
<dbReference type="STRING" id="3702.Q9FRV4"/>
<dbReference type="PaxDb" id="3702-AT3G15170.1"/>
<dbReference type="ProteomicsDB" id="251280"/>
<dbReference type="DNASU" id="820748"/>
<dbReference type="EnsemblPlants" id="AT3G15170.1">
    <property type="protein sequence ID" value="AT3G15170.1"/>
    <property type="gene ID" value="AT3G15170"/>
</dbReference>
<dbReference type="GeneID" id="820748"/>
<dbReference type="Gramene" id="AT3G15170.1">
    <property type="protein sequence ID" value="AT3G15170.1"/>
    <property type="gene ID" value="AT3G15170"/>
</dbReference>
<dbReference type="KEGG" id="ath:AT3G15170"/>
<dbReference type="Araport" id="AT3G15170"/>
<dbReference type="TAIR" id="AT3G15170">
    <property type="gene designation" value="CUC1"/>
</dbReference>
<dbReference type="eggNOG" id="ENOG502QSC9">
    <property type="taxonomic scope" value="Eukaryota"/>
</dbReference>
<dbReference type="HOGENOM" id="CLU_035664_5_2_1"/>
<dbReference type="InParanoid" id="Q9FRV4"/>
<dbReference type="OMA" id="NTFATEH"/>
<dbReference type="PhylomeDB" id="Q9FRV4"/>
<dbReference type="PRO" id="PR:Q9FRV4"/>
<dbReference type="Proteomes" id="UP000006548">
    <property type="component" value="Chromosome 3"/>
</dbReference>
<dbReference type="ExpressionAtlas" id="Q9FRV4">
    <property type="expression patterns" value="baseline and differential"/>
</dbReference>
<dbReference type="GO" id="GO:0005634">
    <property type="term" value="C:nucleus"/>
    <property type="evidence" value="ECO:0007669"/>
    <property type="project" value="UniProtKB-SubCell"/>
</dbReference>
<dbReference type="GO" id="GO:0003700">
    <property type="term" value="F:DNA-binding transcription factor activity"/>
    <property type="evidence" value="ECO:0000250"/>
    <property type="project" value="TAIR"/>
</dbReference>
<dbReference type="GO" id="GO:0000976">
    <property type="term" value="F:transcription cis-regulatory region binding"/>
    <property type="evidence" value="ECO:0000353"/>
    <property type="project" value="TAIR"/>
</dbReference>
<dbReference type="GO" id="GO:0009908">
    <property type="term" value="P:flower development"/>
    <property type="evidence" value="ECO:0000315"/>
    <property type="project" value="TAIR"/>
</dbReference>
<dbReference type="GO" id="GO:0090691">
    <property type="term" value="P:formation of plant organ boundary"/>
    <property type="evidence" value="ECO:0000316"/>
    <property type="project" value="TAIR"/>
</dbReference>
<dbReference type="GO" id="GO:0048527">
    <property type="term" value="P:lateral root development"/>
    <property type="evidence" value="ECO:0000304"/>
    <property type="project" value="TAIR"/>
</dbReference>
<dbReference type="GO" id="GO:0010014">
    <property type="term" value="P:meristem initiation"/>
    <property type="evidence" value="ECO:0000315"/>
    <property type="project" value="TAIR"/>
</dbReference>
<dbReference type="GO" id="GO:0051782">
    <property type="term" value="P:negative regulation of cell division"/>
    <property type="evidence" value="ECO:0000315"/>
    <property type="project" value="TAIR"/>
</dbReference>
<dbReference type="GO" id="GO:0010072">
    <property type="term" value="P:primary shoot apical meristem specification"/>
    <property type="evidence" value="ECO:0000304"/>
    <property type="project" value="TAIR"/>
</dbReference>
<dbReference type="GO" id="GO:0010223">
    <property type="term" value="P:secondary shoot formation"/>
    <property type="evidence" value="ECO:0000315"/>
    <property type="project" value="TAIR"/>
</dbReference>
<dbReference type="FunFam" id="2.170.150.80:FF:000006">
    <property type="entry name" value="NAC domain-containing protein 100-like"/>
    <property type="match status" value="1"/>
</dbReference>
<dbReference type="Gene3D" id="2.170.150.80">
    <property type="entry name" value="NAC domain"/>
    <property type="match status" value="1"/>
</dbReference>
<dbReference type="InterPro" id="IPR003441">
    <property type="entry name" value="NAC-dom"/>
</dbReference>
<dbReference type="InterPro" id="IPR036093">
    <property type="entry name" value="NAC_dom_sf"/>
</dbReference>
<dbReference type="PANTHER" id="PTHR31744:SF83">
    <property type="entry name" value="PROTEIN CUP-SHAPED COTYLEDON 1"/>
    <property type="match status" value="1"/>
</dbReference>
<dbReference type="PANTHER" id="PTHR31744">
    <property type="entry name" value="PROTEIN CUP-SHAPED COTYLEDON 2-RELATED"/>
    <property type="match status" value="1"/>
</dbReference>
<dbReference type="Pfam" id="PF02365">
    <property type="entry name" value="NAM"/>
    <property type="match status" value="1"/>
</dbReference>
<dbReference type="SUPFAM" id="SSF101941">
    <property type="entry name" value="NAC domain"/>
    <property type="match status" value="1"/>
</dbReference>
<dbReference type="PROSITE" id="PS51005">
    <property type="entry name" value="NAC"/>
    <property type="match status" value="1"/>
</dbReference>
<organism>
    <name type="scientific">Arabidopsis thaliana</name>
    <name type="common">Mouse-ear cress</name>
    <dbReference type="NCBI Taxonomy" id="3702"/>
    <lineage>
        <taxon>Eukaryota</taxon>
        <taxon>Viridiplantae</taxon>
        <taxon>Streptophyta</taxon>
        <taxon>Embryophyta</taxon>
        <taxon>Tracheophyta</taxon>
        <taxon>Spermatophyta</taxon>
        <taxon>Magnoliopsida</taxon>
        <taxon>eudicotyledons</taxon>
        <taxon>Gunneridae</taxon>
        <taxon>Pentapetalae</taxon>
        <taxon>rosids</taxon>
        <taxon>malvids</taxon>
        <taxon>Brassicales</taxon>
        <taxon>Brassicaceae</taxon>
        <taxon>Camelineae</taxon>
        <taxon>Arabidopsis</taxon>
    </lineage>
</organism>
<evidence type="ECO:0000255" key="1">
    <source>
        <dbReference type="PROSITE-ProRule" id="PRU00353"/>
    </source>
</evidence>
<evidence type="ECO:0000269" key="2">
    <source>
    </source>
</evidence>
<evidence type="ECO:0000269" key="3">
    <source>
    </source>
</evidence>
<evidence type="ECO:0000269" key="4">
    <source>
    </source>
</evidence>
<evidence type="ECO:0000269" key="5">
    <source>
    </source>
</evidence>
<evidence type="ECO:0000269" key="6">
    <source>
    </source>
</evidence>
<evidence type="ECO:0000269" key="7">
    <source>
    </source>
</evidence>
<evidence type="ECO:0000269" key="8">
    <source>
    </source>
</evidence>
<evidence type="ECO:0000269" key="9">
    <source>
    </source>
</evidence>
<evidence type="ECO:0000269" key="10">
    <source>
    </source>
</evidence>
<evidence type="ECO:0000269" key="11">
    <source>
    </source>
</evidence>
<evidence type="ECO:0000269" key="12">
    <source>
    </source>
</evidence>
<evidence type="ECO:0000269" key="13">
    <source>
    </source>
</evidence>
<evidence type="ECO:0000269" key="14">
    <source>
    </source>
</evidence>
<evidence type="ECO:0000269" key="15">
    <source>
    </source>
</evidence>
<evidence type="ECO:0000269" key="16">
    <source>
    </source>
</evidence>
<evidence type="ECO:0000269" key="17">
    <source>
    </source>
</evidence>
<evidence type="ECO:0000269" key="18">
    <source>
    </source>
</evidence>
<evidence type="ECO:0000269" key="19">
    <source>
    </source>
</evidence>
<evidence type="ECO:0000305" key="20"/>
<keyword id="KW-0217">Developmental protein</keyword>
<keyword id="KW-0238">DNA-binding</keyword>
<keyword id="KW-0539">Nucleus</keyword>
<keyword id="KW-1185">Reference proteome</keyword>
<keyword id="KW-0804">Transcription</keyword>
<keyword id="KW-0805">Transcription regulation</keyword>
<feature type="chain" id="PRO_0000312286" description="Protein CUP-SHAPED COTYLEDON 1">
    <location>
        <begin position="1"/>
        <end position="310"/>
    </location>
</feature>
<feature type="domain" description="NAC" evidence="1">
    <location>
        <begin position="20"/>
        <end position="172"/>
    </location>
</feature>
<feature type="DNA-binding region" evidence="1">
    <location>
        <begin position="119"/>
        <end position="178"/>
    </location>
</feature>
<feature type="region of interest" description="Involved in transactivation activity">
    <location>
        <begin position="179"/>
        <end position="210"/>
    </location>
</feature>
<feature type="region of interest" description="Involved in transactivation activity">
    <location>
        <begin position="306"/>
        <end position="310"/>
    </location>
</feature>
<feature type="mutagenesis site" description="In cuc1-8; cup-shaped cotyledon and abnormal SAM." evidence="17">
    <original>G</original>
    <variation>E</variation>
    <location>
        <position position="23"/>
    </location>
</feature>
<feature type="mutagenesis site" description="In cuc1-9; cup-shaped cotyledon and abnormal SAM." evidence="17">
    <original>L</original>
    <variation>F</variation>
    <location>
        <position position="38"/>
    </location>
</feature>
<feature type="mutagenesis site" description="In cuc1-4; cup-shaped cotyledon and abnormal SAM." evidence="4">
    <original>L</original>
    <variation>F</variation>
    <location>
        <position position="65"/>
    </location>
</feature>
<feature type="mutagenesis site" description="In cuc1-10; cup-shaped cotyledon and abnormal SAM." evidence="17">
    <original>E</original>
    <variation>K</variation>
    <location>
        <position position="75"/>
    </location>
</feature>
<feature type="mutagenesis site" description="In cuc1-11; cup-shaped cotyledon and abnormal SAM." evidence="17">
    <original>R</original>
    <variation>C</variation>
    <location>
        <position position="84"/>
    </location>
</feature>
<feature type="mutagenesis site" description="In cuc1-12; cup-shaped cotyledon and abnormal SAM." evidence="17">
    <original>G</original>
    <variation>S</variation>
    <location>
        <position position="99"/>
    </location>
</feature>
<feature type="mutagenesis site" description="In cuc1-1; cup-shaped cotyledon and abnormal SAM." evidence="4">
    <original>K</original>
    <variation>T</variation>
    <location>
        <position position="123"/>
    </location>
</feature>
<feature type="mutagenesis site" description="In cuc1-3; cup-shaped cotyledon and abnormal SAM." evidence="4">
    <location>
        <begin position="306"/>
        <end position="310"/>
    </location>
</feature>
<feature type="mutagenesis site" description="Loss of transactivation activity; when associated with A-308." evidence="12">
    <original>W</original>
    <variation>A</variation>
    <location>
        <position position="306"/>
    </location>
</feature>
<feature type="mutagenesis site" description="In cuc1-6; cup-shaped cotyledon and abnormal SAM." evidence="17">
    <original>P</original>
    <variation>L</variation>
    <location>
        <position position="307"/>
    </location>
</feature>
<feature type="mutagenesis site" description="Loss of transactivation activity. when associated with A-306." evidence="12">
    <original>F</original>
    <variation>A</variation>
    <location>
        <position position="308"/>
    </location>
</feature>
<proteinExistence type="evidence at protein level"/>
<accession>Q9FRV4</accession>
<accession>Q9LIL8</accession>